<keyword id="KW-0002">3D-structure</keyword>
<keyword id="KW-0135">Cellulose biosynthesis</keyword>
<keyword id="KW-1185">Reference proteome</keyword>
<comment type="induction">
    <text evidence="1 2">Part of the yhjR-bcsQABZC operon (PubMed:19400787, PubMed:24097954), it is expressed about 5-fold higher than bcsQ (when the latter has a restored reading frame) (PubMed:24097954). Expressed in mid-log phase, expression increases dramatically as cells enter stationary phase, the increase is dependent on rpoS (PubMed:24097954).</text>
</comment>
<comment type="disruption phenotype">
    <text evidence="1 2">Not required for cellulose synthesis in strain 1094 (PubMed:19400787). When disrupted in a cellulose-synthesizing strain (W3110 derivative with a functional bcsQ gene), cellulose is no longer made.</text>
</comment>
<comment type="miscellaneous">
    <text evidence="3">Cellulose production is abolished in E.coli K12 / MG1655 and W3110 due to a premature stop codon in bcsQ (PubMed:24097954).</text>
</comment>
<proteinExistence type="evidence at protein level"/>
<dbReference type="EMBL" id="U00039">
    <property type="protein sequence ID" value="AAB18513.1"/>
    <property type="molecule type" value="Genomic_DNA"/>
</dbReference>
<dbReference type="EMBL" id="U00096">
    <property type="protein sequence ID" value="AAC76560.1"/>
    <property type="molecule type" value="Genomic_DNA"/>
</dbReference>
<dbReference type="EMBL" id="AP009048">
    <property type="protein sequence ID" value="BAE77760.1"/>
    <property type="molecule type" value="Genomic_DNA"/>
</dbReference>
<dbReference type="PIR" id="S47757">
    <property type="entry name" value="S47757"/>
</dbReference>
<dbReference type="RefSeq" id="NP_417992.1">
    <property type="nucleotide sequence ID" value="NC_000913.3"/>
</dbReference>
<dbReference type="PDB" id="6YAR">
    <property type="method" value="X-ray"/>
    <property type="resolution" value="1.90 A"/>
    <property type="chains" value="C/D=1-62"/>
</dbReference>
<dbReference type="PDB" id="6YAY">
    <property type="method" value="X-ray"/>
    <property type="resolution" value="2.09 A"/>
    <property type="chains" value="C/D=1-62"/>
</dbReference>
<dbReference type="PDB" id="6YB3">
    <property type="method" value="X-ray"/>
    <property type="resolution" value="1.59 A"/>
    <property type="chains" value="C/D=1-62"/>
</dbReference>
<dbReference type="PDB" id="6YB5">
    <property type="method" value="X-ray"/>
    <property type="resolution" value="1.59 A"/>
    <property type="chains" value="C/D=1-62"/>
</dbReference>
<dbReference type="PDB" id="6YBB">
    <property type="method" value="X-ray"/>
    <property type="resolution" value="2.90 A"/>
    <property type="chains" value="C/D=1-62"/>
</dbReference>
<dbReference type="PDB" id="6YBU">
    <property type="method" value="X-ray"/>
    <property type="resolution" value="2.49 A"/>
    <property type="chains" value="C/D/I/J=1-62"/>
</dbReference>
<dbReference type="PDB" id="9FNN">
    <property type="method" value="EM"/>
    <property type="resolution" value="2.85 A"/>
    <property type="chains" value="R/V=2-62"/>
</dbReference>
<dbReference type="PDB" id="9FP0">
    <property type="method" value="EM"/>
    <property type="resolution" value="3.37 A"/>
    <property type="chains" value="R/V=2-62"/>
</dbReference>
<dbReference type="PDB" id="9FP2">
    <property type="method" value="EM"/>
    <property type="resolution" value="3.76 A"/>
    <property type="chains" value="R/V=2-62"/>
</dbReference>
<dbReference type="PDBsum" id="6YAR"/>
<dbReference type="PDBsum" id="6YAY"/>
<dbReference type="PDBsum" id="6YB3"/>
<dbReference type="PDBsum" id="6YB5"/>
<dbReference type="PDBsum" id="6YBB"/>
<dbReference type="PDBsum" id="6YBU"/>
<dbReference type="PDBsum" id="9FNN"/>
<dbReference type="PDBsum" id="9FP0"/>
<dbReference type="PDBsum" id="9FP2"/>
<dbReference type="SMR" id="P0ADJ3"/>
<dbReference type="BioGRID" id="4260853">
    <property type="interactions" value="264"/>
</dbReference>
<dbReference type="FunCoup" id="P0ADJ3">
    <property type="interactions" value="14"/>
</dbReference>
<dbReference type="IntAct" id="P0ADJ3">
    <property type="interactions" value="2"/>
</dbReference>
<dbReference type="STRING" id="511145.b3535"/>
<dbReference type="PaxDb" id="511145-b3535"/>
<dbReference type="EnsemblBacteria" id="AAC76560">
    <property type="protein sequence ID" value="AAC76560"/>
    <property type="gene ID" value="b3535"/>
</dbReference>
<dbReference type="GeneID" id="948051"/>
<dbReference type="KEGG" id="ecj:JW3503"/>
<dbReference type="KEGG" id="eco:b3535"/>
<dbReference type="KEGG" id="ecoc:C3026_19150"/>
<dbReference type="PATRIC" id="fig|511145.12.peg.3646"/>
<dbReference type="EchoBASE" id="EB2171"/>
<dbReference type="eggNOG" id="ENOG5033BAX">
    <property type="taxonomic scope" value="Bacteria"/>
</dbReference>
<dbReference type="HOGENOM" id="CLU_185167_0_0_6"/>
<dbReference type="InParanoid" id="P0ADJ3"/>
<dbReference type="OMA" id="MMTRWPL"/>
<dbReference type="OrthoDB" id="6636615at2"/>
<dbReference type="BioCyc" id="EcoCyc:EG12262-MONOMER"/>
<dbReference type="PRO" id="PR:P0ADJ3"/>
<dbReference type="Proteomes" id="UP000000625">
    <property type="component" value="Chromosome"/>
</dbReference>
<dbReference type="GO" id="GO:0090540">
    <property type="term" value="P:bacterial cellulose biosynthetic process"/>
    <property type="evidence" value="ECO:0000315"/>
    <property type="project" value="EcoCyc"/>
</dbReference>
<dbReference type="InterPro" id="IPR024487">
    <property type="entry name" value="CBP_BcsR"/>
</dbReference>
<dbReference type="NCBIfam" id="NF040717">
    <property type="entry name" value="BcsR_only"/>
    <property type="match status" value="1"/>
</dbReference>
<dbReference type="Pfam" id="PF10945">
    <property type="entry name" value="CBP_BcsR"/>
    <property type="match status" value="1"/>
</dbReference>
<sequence>MNNNEPDTLPDPAIGYIFQNDIVALKQAFSLPDIDYADISQREQLAAALKRWPLLAEFAQQK</sequence>
<name>YHJR_ECOLI</name>
<reference key="1">
    <citation type="journal article" date="1994" name="Nucleic Acids Res.">
        <title>Analysis of the Escherichia coli genome. V. DNA sequence of the region from 76.0 to 81.5 minutes.</title>
        <authorList>
            <person name="Sofia H.J."/>
            <person name="Burland V."/>
            <person name="Daniels D.L."/>
            <person name="Plunkett G. III"/>
            <person name="Blattner F.R."/>
        </authorList>
    </citation>
    <scope>NUCLEOTIDE SEQUENCE [LARGE SCALE GENOMIC DNA]</scope>
    <source>
        <strain>K12 / MG1655 / ATCC 47076</strain>
    </source>
</reference>
<reference key="2">
    <citation type="journal article" date="1997" name="Science">
        <title>The complete genome sequence of Escherichia coli K-12.</title>
        <authorList>
            <person name="Blattner F.R."/>
            <person name="Plunkett G. III"/>
            <person name="Bloch C.A."/>
            <person name="Perna N.T."/>
            <person name="Burland V."/>
            <person name="Riley M."/>
            <person name="Collado-Vides J."/>
            <person name="Glasner J.D."/>
            <person name="Rode C.K."/>
            <person name="Mayhew G.F."/>
            <person name="Gregor J."/>
            <person name="Davis N.W."/>
            <person name="Kirkpatrick H.A."/>
            <person name="Goeden M.A."/>
            <person name="Rose D.J."/>
            <person name="Mau B."/>
            <person name="Shao Y."/>
        </authorList>
    </citation>
    <scope>NUCLEOTIDE SEQUENCE [LARGE SCALE GENOMIC DNA]</scope>
    <source>
        <strain>K12 / MG1655 / ATCC 47076</strain>
    </source>
</reference>
<reference key="3">
    <citation type="journal article" date="2006" name="Mol. Syst. Biol.">
        <title>Highly accurate genome sequences of Escherichia coli K-12 strains MG1655 and W3110.</title>
        <authorList>
            <person name="Hayashi K."/>
            <person name="Morooka N."/>
            <person name="Yamamoto Y."/>
            <person name="Fujita K."/>
            <person name="Isono K."/>
            <person name="Choi S."/>
            <person name="Ohtsubo E."/>
            <person name="Baba T."/>
            <person name="Wanner B.L."/>
            <person name="Mori H."/>
            <person name="Horiuchi T."/>
        </authorList>
    </citation>
    <scope>NUCLEOTIDE SEQUENCE [LARGE SCALE GENOMIC DNA]</scope>
    <source>
        <strain>K12 / W3110 / ATCC 27325 / DSM 5911</strain>
    </source>
</reference>
<reference key="4">
    <citation type="journal article" date="2009" name="Mol. Microbiol.">
        <title>BcsQ is an essential component of the Escherichia coli cellulose biosynthesis apparatus that localizes at the bacterial cell pole.</title>
        <authorList>
            <person name="Le Quere B."/>
            <person name="Ghigo J.M."/>
        </authorList>
    </citation>
    <scope>INDUCTION</scope>
    <scope>DISRUPTION PHENOTYPE</scope>
    <source>
        <strain>1094</strain>
    </source>
</reference>
<reference key="5">
    <citation type="journal article" date="2013" name="J. Bacteriol.">
        <title>Cellulose as an architectural element in spatially structured Escherichia coli biofilms.</title>
        <authorList>
            <person name="Serra D.O."/>
            <person name="Richter A.M."/>
            <person name="Hengge R."/>
        </authorList>
    </citation>
    <scope>INDUCTION</scope>
    <scope>DISRUPTION PHENOTYPE</scope>
    <source>
        <strain>K12 / W3110 / AR3110</strain>
    </source>
</reference>
<accession>P0ADJ3</accession>
<accession>P37656</accession>
<accession>Q2M7J6</accession>
<evidence type="ECO:0000269" key="1">
    <source>
    </source>
</evidence>
<evidence type="ECO:0000269" key="2">
    <source>
    </source>
</evidence>
<evidence type="ECO:0000305" key="3">
    <source>
    </source>
</evidence>
<evidence type="ECO:0007829" key="4">
    <source>
        <dbReference type="PDB" id="6YB3"/>
    </source>
</evidence>
<evidence type="ECO:0007829" key="5">
    <source>
        <dbReference type="PDB" id="6YBB"/>
    </source>
</evidence>
<gene>
    <name type="primary">yhjR</name>
    <name type="ordered locus">b3535</name>
    <name type="ordered locus">JW3503</name>
</gene>
<feature type="chain" id="PRO_0000169578" description="Protein YhjR">
    <location>
        <begin position="1"/>
        <end position="62"/>
    </location>
</feature>
<feature type="turn" evidence="5">
    <location>
        <begin position="12"/>
        <end position="14"/>
    </location>
</feature>
<feature type="strand" evidence="4">
    <location>
        <begin position="16"/>
        <end position="20"/>
    </location>
</feature>
<feature type="turn" evidence="4">
    <location>
        <begin position="21"/>
        <end position="24"/>
    </location>
</feature>
<feature type="strand" evidence="4">
    <location>
        <begin position="25"/>
        <end position="30"/>
    </location>
</feature>
<feature type="helix" evidence="4">
    <location>
        <begin position="39"/>
        <end position="41"/>
    </location>
</feature>
<feature type="helix" evidence="4">
    <location>
        <begin position="43"/>
        <end position="51"/>
    </location>
</feature>
<feature type="helix" evidence="4">
    <location>
        <begin position="53"/>
        <end position="60"/>
    </location>
</feature>
<organism>
    <name type="scientific">Escherichia coli (strain K12)</name>
    <dbReference type="NCBI Taxonomy" id="83333"/>
    <lineage>
        <taxon>Bacteria</taxon>
        <taxon>Pseudomonadati</taxon>
        <taxon>Pseudomonadota</taxon>
        <taxon>Gammaproteobacteria</taxon>
        <taxon>Enterobacterales</taxon>
        <taxon>Enterobacteriaceae</taxon>
        <taxon>Escherichia</taxon>
    </lineage>
</organism>
<protein>
    <recommendedName>
        <fullName>Protein YhjR</fullName>
    </recommendedName>
</protein>